<dbReference type="EC" id="5.1.3.2"/>
<dbReference type="EC" id="5.1.3.3"/>
<dbReference type="EMBL" id="X68593">
    <property type="protein sequence ID" value="CAA48580.1"/>
    <property type="molecule type" value="Genomic_DNA"/>
</dbReference>
<dbReference type="PIR" id="S29621">
    <property type="entry name" value="S29621"/>
</dbReference>
<dbReference type="SMR" id="P40801"/>
<dbReference type="BRENDA" id="5.1.3.2">
    <property type="organism ID" value="4482"/>
</dbReference>
<dbReference type="UniPathway" id="UPA00214"/>
<dbReference type="UniPathway" id="UPA00242"/>
<dbReference type="GO" id="GO:0005829">
    <property type="term" value="C:cytosol"/>
    <property type="evidence" value="ECO:0007669"/>
    <property type="project" value="TreeGrafter"/>
</dbReference>
<dbReference type="GO" id="GO:0004034">
    <property type="term" value="F:aldose 1-epimerase activity"/>
    <property type="evidence" value="ECO:0007669"/>
    <property type="project" value="UniProtKB-EC"/>
</dbReference>
<dbReference type="GO" id="GO:0030246">
    <property type="term" value="F:carbohydrate binding"/>
    <property type="evidence" value="ECO:0007669"/>
    <property type="project" value="InterPro"/>
</dbReference>
<dbReference type="GO" id="GO:0003978">
    <property type="term" value="F:UDP-glucose 4-epimerase activity"/>
    <property type="evidence" value="ECO:0007669"/>
    <property type="project" value="UniProtKB-EC"/>
</dbReference>
<dbReference type="GO" id="GO:0006012">
    <property type="term" value="P:galactose metabolic process"/>
    <property type="evidence" value="ECO:0007669"/>
    <property type="project" value="UniProtKB-UniPathway"/>
</dbReference>
<dbReference type="CDD" id="cd09019">
    <property type="entry name" value="galactose_mutarotase_like"/>
    <property type="match status" value="1"/>
</dbReference>
<dbReference type="CDD" id="cd05247">
    <property type="entry name" value="UDP_G4E_1_SDR_e"/>
    <property type="match status" value="1"/>
</dbReference>
<dbReference type="Gene3D" id="2.70.98.10">
    <property type="match status" value="1"/>
</dbReference>
<dbReference type="Gene3D" id="3.40.50.720">
    <property type="entry name" value="NAD(P)-binding Rossmann-like Domain"/>
    <property type="match status" value="1"/>
</dbReference>
<dbReference type="Gene3D" id="3.90.25.10">
    <property type="entry name" value="UDP-galactose 4-epimerase, domain 1"/>
    <property type="match status" value="1"/>
</dbReference>
<dbReference type="InterPro" id="IPR018052">
    <property type="entry name" value="Ald1_epimerase_CS"/>
</dbReference>
<dbReference type="InterPro" id="IPR008183">
    <property type="entry name" value="Aldose_1/G6P_1-epimerase"/>
</dbReference>
<dbReference type="InterPro" id="IPR011013">
    <property type="entry name" value="Gal_mutarotase_sf_dom"/>
</dbReference>
<dbReference type="InterPro" id="IPR047215">
    <property type="entry name" value="Galactose_mutarotase-like"/>
</dbReference>
<dbReference type="InterPro" id="IPR014718">
    <property type="entry name" value="GH-type_carb-bd"/>
</dbReference>
<dbReference type="InterPro" id="IPR016040">
    <property type="entry name" value="NAD(P)-bd_dom"/>
</dbReference>
<dbReference type="InterPro" id="IPR036291">
    <property type="entry name" value="NAD(P)-bd_dom_sf"/>
</dbReference>
<dbReference type="InterPro" id="IPR005886">
    <property type="entry name" value="UDP_G4E"/>
</dbReference>
<dbReference type="NCBIfam" id="TIGR01179">
    <property type="entry name" value="galE"/>
    <property type="match status" value="1"/>
</dbReference>
<dbReference type="NCBIfam" id="NF007956">
    <property type="entry name" value="PRK10675.1"/>
    <property type="match status" value="1"/>
</dbReference>
<dbReference type="PANTHER" id="PTHR43725">
    <property type="entry name" value="UDP-GLUCOSE 4-EPIMERASE"/>
    <property type="match status" value="1"/>
</dbReference>
<dbReference type="PANTHER" id="PTHR43725:SF47">
    <property type="entry name" value="UDP-GLUCOSE 4-EPIMERASE"/>
    <property type="match status" value="1"/>
</dbReference>
<dbReference type="Pfam" id="PF01263">
    <property type="entry name" value="Aldose_epim"/>
    <property type="match status" value="1"/>
</dbReference>
<dbReference type="Pfam" id="PF16363">
    <property type="entry name" value="GDP_Man_Dehyd"/>
    <property type="match status" value="1"/>
</dbReference>
<dbReference type="SUPFAM" id="SSF74650">
    <property type="entry name" value="Galactose mutarotase-like"/>
    <property type="match status" value="1"/>
</dbReference>
<dbReference type="SUPFAM" id="SSF51735">
    <property type="entry name" value="NAD(P)-binding Rossmann-fold domains"/>
    <property type="match status" value="1"/>
</dbReference>
<dbReference type="PROSITE" id="PS00545">
    <property type="entry name" value="ALDOSE_1_EPIMERASE"/>
    <property type="match status" value="1"/>
</dbReference>
<evidence type="ECO:0000250" key="1"/>
<evidence type="ECO:0000255" key="2"/>
<evidence type="ECO:0000255" key="3">
    <source>
        <dbReference type="PROSITE-ProRule" id="PRU10126"/>
    </source>
</evidence>
<evidence type="ECO:0000305" key="4"/>
<name>GAL10_PACTA</name>
<accession>P40801</accession>
<gene>
    <name type="primary">GAL10</name>
</gene>
<comment type="function">
    <text evidence="1">Mutarotase converts alpha-aldose to the beta-anomer. It is active on D-glucose, L-arabinose, D-xylose, D-galactose, maltose and lactose (By similarity).</text>
</comment>
<comment type="catalytic activity">
    <reaction>
        <text>UDP-alpha-D-glucose = UDP-alpha-D-galactose</text>
        <dbReference type="Rhea" id="RHEA:22168"/>
        <dbReference type="ChEBI" id="CHEBI:58885"/>
        <dbReference type="ChEBI" id="CHEBI:66914"/>
        <dbReference type="EC" id="5.1.3.2"/>
    </reaction>
</comment>
<comment type="catalytic activity">
    <reaction evidence="3">
        <text>alpha-D-glucose = beta-D-glucose</text>
        <dbReference type="Rhea" id="RHEA:10264"/>
        <dbReference type="ChEBI" id="CHEBI:15903"/>
        <dbReference type="ChEBI" id="CHEBI:17925"/>
        <dbReference type="EC" id="5.1.3.3"/>
    </reaction>
</comment>
<comment type="cofactor">
    <cofactor>
        <name>NAD(+)</name>
        <dbReference type="ChEBI" id="CHEBI:57540"/>
    </cofactor>
</comment>
<comment type="pathway">
    <text>Carbohydrate metabolism; galactose metabolism.</text>
</comment>
<comment type="pathway">
    <text>Carbohydrate metabolism; hexose metabolism.</text>
</comment>
<comment type="induction">
    <text>By xylose.</text>
</comment>
<comment type="similarity">
    <text evidence="4">In the N-terminal section; belongs to the NAD(P)-dependent epimerase/dehydratase family.</text>
</comment>
<comment type="similarity">
    <text evidence="4">In the C-terminal section; belongs to the aldose epimerase family.</text>
</comment>
<protein>
    <recommendedName>
        <fullName>Bifunctional protein GAL10</fullName>
    </recommendedName>
    <domain>
        <recommendedName>
            <fullName>UDP-glucose 4-epimerase</fullName>
            <ecNumber>5.1.3.2</ecNumber>
        </recommendedName>
        <alternativeName>
            <fullName>Galactowaldenase</fullName>
        </alternativeName>
    </domain>
    <domain>
        <recommendedName>
            <fullName>Aldose 1-epimerase</fullName>
            <ecNumber>5.1.3.3</ecNumber>
        </recommendedName>
        <alternativeName>
            <fullName>Galactose mutarotase</fullName>
        </alternativeName>
    </domain>
</protein>
<reference key="1">
    <citation type="journal article" date="1994" name="Gene">
        <title>A gene homologous to that encoding UDP galactose-4-epimerase is inducible by xylose in the yeast Pachysolen tannophilus.</title>
        <authorList>
            <person name="Skrzypek M."/>
            <person name="Maleszka R."/>
        </authorList>
    </citation>
    <scope>NUCLEOTIDE SEQUENCE [GENOMIC DNA]</scope>
    <source>
        <strain>ATCC 32691 / BCRC 20329 / CBS 4044 / DSM 70352 / NBRC 1007 / NRRL Y-2460</strain>
    </source>
</reference>
<feature type="chain" id="PRO_0000197440" description="Bifunctional protein GAL10">
    <location>
        <begin position="1"/>
        <end position="689"/>
    </location>
</feature>
<feature type="region of interest" description="Galactowaldenase">
    <location>
        <begin position="1"/>
        <end position="345"/>
    </location>
</feature>
<feature type="region of interest" description="Mutarotase">
    <location>
        <begin position="346"/>
        <end position="689"/>
    </location>
</feature>
<feature type="active site" description="For mutarotase activity" evidence="2">
    <location>
        <position position="534"/>
    </location>
</feature>
<feature type="binding site" evidence="2">
    <location>
        <begin position="3"/>
        <end position="34"/>
    </location>
    <ligand>
        <name>NAD(+)</name>
        <dbReference type="ChEBI" id="CHEBI:57540"/>
    </ligand>
</feature>
<proteinExistence type="evidence at transcript level"/>
<sequence length="689" mass="76671">MSYILVTGGAGYIGSHTVVELVNNGYNVVVVDNLVNSSYDVIVRIEVLTRKQIPFFKIDLNDHDALDQVFKLYPIQAVLHFAALKAVGESTKFPLNYYSNNVGGAISLLKVMEENNVKNIVFSSSATVYGDATRFENMIPIPEHCPTGPTNPYGETKITIENIIRDVYANDKSWKCAILRYFNPIGAHPSGLIGEDPLGIPNNLLPFLAQVAIGRREKLSVFGSDYNSKDGTPIRDYIHVIDLAKGHIAALNYLFNHKDNGLCREWNLGTGNGSTVFEVFNAFCEAVGKKLPFEVVGRRDGDVLNLTANPKRANTELKWKAQLSINDACKDLWNWTTKNPFGFQINNYSWTKFDSESLTNYDRLNTVRTFNGKFEVSISNHGATIVAAKLNGIKLNLGFDNLKGYLREDNPFFGATIGRVANRISKGDLLINGTHYQVGLNELHRTSLHGGTYGYNKRTFLGPIVKTNEKEKETTMEFVLIDLDGTEGYPGDVETKVIYTVRDTGVGGELGIEYEAKLLEESGRDSTAVSLTNHSYWNIGNQPSIEGTHIKLVSNKHLESNPLDSTPTGKIVTSTDLDSQNSAKLGPDGPVFDYCFVTKQQDKLDTRNDELRVVATATHPKTRIAFTTLTTEPAFQFYTGDGVDVAGVFTKRSGFCLEASRYIYNPKWFIPLNKGEVYGSYTIYRFENF</sequence>
<organism>
    <name type="scientific">Pachysolen tannophilus</name>
    <name type="common">Yeast</name>
    <dbReference type="NCBI Taxonomy" id="4918"/>
    <lineage>
        <taxon>Eukaryota</taxon>
        <taxon>Fungi</taxon>
        <taxon>Dikarya</taxon>
        <taxon>Ascomycota</taxon>
        <taxon>Saccharomycotina</taxon>
        <taxon>Pichiomycetes</taxon>
        <taxon>Pachysolenaceae</taxon>
        <taxon>Pachysolen</taxon>
    </lineage>
</organism>
<keyword id="KW-0119">Carbohydrate metabolism</keyword>
<keyword id="KW-0299">Galactose metabolism</keyword>
<keyword id="KW-0413">Isomerase</keyword>
<keyword id="KW-0511">Multifunctional enzyme</keyword>
<keyword id="KW-0520">NAD</keyword>